<organism>
    <name type="scientific">Caldicellulosiruptor bescii (strain ATCC BAA-1888 / DSM 6725 / KCTC 15123 / Z-1320)</name>
    <name type="common">Anaerocellum thermophilum</name>
    <dbReference type="NCBI Taxonomy" id="521460"/>
    <lineage>
        <taxon>Bacteria</taxon>
        <taxon>Bacillati</taxon>
        <taxon>Bacillota</taxon>
        <taxon>Bacillota incertae sedis</taxon>
        <taxon>Caldicellulosiruptorales</taxon>
        <taxon>Caldicellulosiruptoraceae</taxon>
        <taxon>Caldicellulosiruptor</taxon>
    </lineage>
</organism>
<name>PYRF_CALBD</name>
<protein>
    <recommendedName>
        <fullName evidence="1">Orotidine 5'-phosphate decarboxylase</fullName>
        <ecNumber evidence="1">4.1.1.23</ecNumber>
    </recommendedName>
    <alternativeName>
        <fullName evidence="1">OMP decarboxylase</fullName>
        <shortName evidence="1">OMPDCase</shortName>
        <shortName evidence="1">OMPdecase</shortName>
    </alternativeName>
</protein>
<accession>B9MS23</accession>
<proteinExistence type="inferred from homology"/>
<sequence>MLNFSDRLIESIKKKNSVLIAGIDTSIENIPDYFIKRFYDKEKSEIDNLKTILFEYIRRIIDAVEENVVGVKFQAAFFEQYSYHGFEVLHKLCEYTKNKKLVVIFDGKRNDISSSAKGYSNAYLGETPVFGKKMRFFEFDAITTNPYLGQDGIKPFVEDCERFKKGLFVLVKTSNPSSADFQDLMVEDKYLFEVVAEKVYEWGKNCIGKEGYSDVGAVVGATQPEAAKRIREILPNSFFLVPGIGVQGGKIEDLKYFVDSNNMGIIVNSSRDIIYAYKNYVHSDFEKSSYLASKNIKESINAAIS</sequence>
<feature type="chain" id="PRO_1000164744" description="Orotidine 5'-phosphate decarboxylase">
    <location>
        <begin position="1"/>
        <end position="305"/>
    </location>
</feature>
<feature type="active site" description="Proton donor" evidence="1">
    <location>
        <position position="108"/>
    </location>
</feature>
<gene>
    <name evidence="1" type="primary">pyrF</name>
    <name type="ordered locus">Athe_1377</name>
</gene>
<comment type="catalytic activity">
    <reaction evidence="1">
        <text>orotidine 5'-phosphate + H(+) = UMP + CO2</text>
        <dbReference type="Rhea" id="RHEA:11596"/>
        <dbReference type="ChEBI" id="CHEBI:15378"/>
        <dbReference type="ChEBI" id="CHEBI:16526"/>
        <dbReference type="ChEBI" id="CHEBI:57538"/>
        <dbReference type="ChEBI" id="CHEBI:57865"/>
        <dbReference type="EC" id="4.1.1.23"/>
    </reaction>
</comment>
<comment type="pathway">
    <text evidence="1">Pyrimidine metabolism; UMP biosynthesis via de novo pathway; UMP from orotate: step 2/2.</text>
</comment>
<comment type="similarity">
    <text evidence="1">Belongs to the OMP decarboxylase family. Type 2 subfamily.</text>
</comment>
<dbReference type="EC" id="4.1.1.23" evidence="1"/>
<dbReference type="EMBL" id="CP001393">
    <property type="protein sequence ID" value="ACM60477.1"/>
    <property type="molecule type" value="Genomic_DNA"/>
</dbReference>
<dbReference type="RefSeq" id="WP_015907846.1">
    <property type="nucleotide sequence ID" value="NC_012034.1"/>
</dbReference>
<dbReference type="SMR" id="B9MS23"/>
<dbReference type="STRING" id="521460.Athe_1377"/>
<dbReference type="GeneID" id="31772724"/>
<dbReference type="KEGG" id="ate:Athe_1377"/>
<dbReference type="eggNOG" id="COG0284">
    <property type="taxonomic scope" value="Bacteria"/>
</dbReference>
<dbReference type="HOGENOM" id="CLU_060704_1_1_9"/>
<dbReference type="UniPathway" id="UPA00070">
    <property type="reaction ID" value="UER00120"/>
</dbReference>
<dbReference type="Proteomes" id="UP000007723">
    <property type="component" value="Chromosome"/>
</dbReference>
<dbReference type="GO" id="GO:0004590">
    <property type="term" value="F:orotidine-5'-phosphate decarboxylase activity"/>
    <property type="evidence" value="ECO:0007669"/>
    <property type="project" value="UniProtKB-UniRule"/>
</dbReference>
<dbReference type="GO" id="GO:0006207">
    <property type="term" value="P:'de novo' pyrimidine nucleobase biosynthetic process"/>
    <property type="evidence" value="ECO:0007669"/>
    <property type="project" value="InterPro"/>
</dbReference>
<dbReference type="GO" id="GO:0044205">
    <property type="term" value="P:'de novo' UMP biosynthetic process"/>
    <property type="evidence" value="ECO:0007669"/>
    <property type="project" value="UniProtKB-UniRule"/>
</dbReference>
<dbReference type="CDD" id="cd04725">
    <property type="entry name" value="OMP_decarboxylase_like"/>
    <property type="match status" value="1"/>
</dbReference>
<dbReference type="Gene3D" id="3.20.20.70">
    <property type="entry name" value="Aldolase class I"/>
    <property type="match status" value="1"/>
</dbReference>
<dbReference type="HAMAP" id="MF_01215">
    <property type="entry name" value="OMPdecase_type2"/>
    <property type="match status" value="1"/>
</dbReference>
<dbReference type="InterPro" id="IPR013785">
    <property type="entry name" value="Aldolase_TIM"/>
</dbReference>
<dbReference type="InterPro" id="IPR011995">
    <property type="entry name" value="OMPdecase_type-2"/>
</dbReference>
<dbReference type="InterPro" id="IPR001754">
    <property type="entry name" value="OMPdeCOase_dom"/>
</dbReference>
<dbReference type="InterPro" id="IPR011060">
    <property type="entry name" value="RibuloseP-bd_barrel"/>
</dbReference>
<dbReference type="NCBIfam" id="TIGR02127">
    <property type="entry name" value="pyrF_sub2"/>
    <property type="match status" value="1"/>
</dbReference>
<dbReference type="PANTHER" id="PTHR43375">
    <property type="entry name" value="OROTIDINE 5'-PHOSPHATE DECARBOXYLASE"/>
    <property type="match status" value="1"/>
</dbReference>
<dbReference type="PANTHER" id="PTHR43375:SF1">
    <property type="entry name" value="OROTIDINE 5'-PHOSPHATE DECARBOXYLASE"/>
    <property type="match status" value="1"/>
</dbReference>
<dbReference type="Pfam" id="PF00215">
    <property type="entry name" value="OMPdecase"/>
    <property type="match status" value="1"/>
</dbReference>
<dbReference type="SMART" id="SM00934">
    <property type="entry name" value="OMPdecase"/>
    <property type="match status" value="1"/>
</dbReference>
<dbReference type="SUPFAM" id="SSF51366">
    <property type="entry name" value="Ribulose-phoshate binding barrel"/>
    <property type="match status" value="1"/>
</dbReference>
<evidence type="ECO:0000255" key="1">
    <source>
        <dbReference type="HAMAP-Rule" id="MF_01215"/>
    </source>
</evidence>
<reference key="1">
    <citation type="submission" date="2009-01" db="EMBL/GenBank/DDBJ databases">
        <title>Complete sequence of chromosome of Caldicellulosiruptor becscii DSM 6725.</title>
        <authorList>
            <person name="Lucas S."/>
            <person name="Copeland A."/>
            <person name="Lapidus A."/>
            <person name="Glavina del Rio T."/>
            <person name="Tice H."/>
            <person name="Bruce D."/>
            <person name="Goodwin L."/>
            <person name="Pitluck S."/>
            <person name="Sims D."/>
            <person name="Meincke L."/>
            <person name="Brettin T."/>
            <person name="Detter J.C."/>
            <person name="Han C."/>
            <person name="Larimer F."/>
            <person name="Land M."/>
            <person name="Hauser L."/>
            <person name="Kyrpides N."/>
            <person name="Ovchinnikova G."/>
            <person name="Kataeva I."/>
            <person name="Adams M.W.W."/>
        </authorList>
    </citation>
    <scope>NUCLEOTIDE SEQUENCE [LARGE SCALE GENOMIC DNA]</scope>
    <source>
        <strain>ATCC BAA-1888 / DSM 6725 / KCTC 15123 / Z-1320</strain>
    </source>
</reference>
<keyword id="KW-0210">Decarboxylase</keyword>
<keyword id="KW-0456">Lyase</keyword>
<keyword id="KW-0665">Pyrimidine biosynthesis</keyword>